<reference key="1">
    <citation type="journal article" date="1998" name="Nature">
        <title>The complete genome of the hyperthermophilic bacterium Aquifex aeolicus.</title>
        <authorList>
            <person name="Deckert G."/>
            <person name="Warren P.V."/>
            <person name="Gaasterland T."/>
            <person name="Young W.G."/>
            <person name="Lenox A.L."/>
            <person name="Graham D.E."/>
            <person name="Overbeek R."/>
            <person name="Snead M.A."/>
            <person name="Keller M."/>
            <person name="Aujay M."/>
            <person name="Huber R."/>
            <person name="Feldman R.A."/>
            <person name="Short J.M."/>
            <person name="Olsen G.J."/>
            <person name="Swanson R.V."/>
        </authorList>
    </citation>
    <scope>NUCLEOTIDE SEQUENCE [LARGE SCALE GENOMIC DNA]</scope>
    <source>
        <strain>VF5</strain>
    </source>
</reference>
<protein>
    <recommendedName>
        <fullName evidence="1">Translation initiation factor IF-1</fullName>
    </recommendedName>
</protein>
<name>IF1_AQUAE</name>
<proteinExistence type="inferred from homology"/>
<accession>O66488</accession>
<organism>
    <name type="scientific">Aquifex aeolicus (strain VF5)</name>
    <dbReference type="NCBI Taxonomy" id="224324"/>
    <lineage>
        <taxon>Bacteria</taxon>
        <taxon>Pseudomonadati</taxon>
        <taxon>Aquificota</taxon>
        <taxon>Aquificia</taxon>
        <taxon>Aquificales</taxon>
        <taxon>Aquificaceae</taxon>
        <taxon>Aquifex</taxon>
    </lineage>
</organism>
<gene>
    <name evidence="1" type="primary">infA</name>
    <name type="ordered locus">aq_075.1</name>
    <name type="ORF">aq_075A</name>
</gene>
<feature type="chain" id="PRO_0000095727" description="Translation initiation factor IF-1">
    <location>
        <begin position="1"/>
        <end position="80"/>
    </location>
</feature>
<feature type="domain" description="S1-like" evidence="1">
    <location>
        <begin position="6"/>
        <end position="80"/>
    </location>
</feature>
<dbReference type="EMBL" id="AE000657">
    <property type="protein sequence ID" value="AAC06447.1"/>
    <property type="molecule type" value="Genomic_DNA"/>
</dbReference>
<dbReference type="PIR" id="E70307">
    <property type="entry name" value="E70307"/>
</dbReference>
<dbReference type="RefSeq" id="NP_213048.1">
    <property type="nucleotide sequence ID" value="NC_000918.1"/>
</dbReference>
<dbReference type="RefSeq" id="WP_010879986.1">
    <property type="nucleotide sequence ID" value="NC_000918.1"/>
</dbReference>
<dbReference type="SMR" id="O66488"/>
<dbReference type="FunCoup" id="O66488">
    <property type="interactions" value="379"/>
</dbReference>
<dbReference type="STRING" id="224324.aq_075a"/>
<dbReference type="EnsemblBacteria" id="AAC06447">
    <property type="protein sequence ID" value="AAC06447"/>
    <property type="gene ID" value="aq_075a"/>
</dbReference>
<dbReference type="KEGG" id="aae:aq_075a"/>
<dbReference type="PATRIC" id="fig|224324.8.peg.66"/>
<dbReference type="eggNOG" id="COG0361">
    <property type="taxonomic scope" value="Bacteria"/>
</dbReference>
<dbReference type="HOGENOM" id="CLU_151267_1_0_0"/>
<dbReference type="InParanoid" id="O66488"/>
<dbReference type="OrthoDB" id="9803250at2"/>
<dbReference type="Proteomes" id="UP000000798">
    <property type="component" value="Chromosome"/>
</dbReference>
<dbReference type="GO" id="GO:0005829">
    <property type="term" value="C:cytosol"/>
    <property type="evidence" value="ECO:0000318"/>
    <property type="project" value="GO_Central"/>
</dbReference>
<dbReference type="GO" id="GO:0043022">
    <property type="term" value="F:ribosome binding"/>
    <property type="evidence" value="ECO:0000318"/>
    <property type="project" value="GO_Central"/>
</dbReference>
<dbReference type="GO" id="GO:0019843">
    <property type="term" value="F:rRNA binding"/>
    <property type="evidence" value="ECO:0007669"/>
    <property type="project" value="UniProtKB-UniRule"/>
</dbReference>
<dbReference type="GO" id="GO:0003743">
    <property type="term" value="F:translation initiation factor activity"/>
    <property type="evidence" value="ECO:0007669"/>
    <property type="project" value="UniProtKB-UniRule"/>
</dbReference>
<dbReference type="CDD" id="cd04451">
    <property type="entry name" value="S1_IF1"/>
    <property type="match status" value="1"/>
</dbReference>
<dbReference type="FunFam" id="2.40.50.140:FF:000002">
    <property type="entry name" value="Translation initiation factor IF-1"/>
    <property type="match status" value="1"/>
</dbReference>
<dbReference type="Gene3D" id="2.40.50.140">
    <property type="entry name" value="Nucleic acid-binding proteins"/>
    <property type="match status" value="1"/>
</dbReference>
<dbReference type="HAMAP" id="MF_00075">
    <property type="entry name" value="IF_1"/>
    <property type="match status" value="1"/>
</dbReference>
<dbReference type="InterPro" id="IPR012340">
    <property type="entry name" value="NA-bd_OB-fold"/>
</dbReference>
<dbReference type="InterPro" id="IPR006196">
    <property type="entry name" value="RNA-binding_domain_S1_IF1"/>
</dbReference>
<dbReference type="InterPro" id="IPR003029">
    <property type="entry name" value="S1_domain"/>
</dbReference>
<dbReference type="InterPro" id="IPR004368">
    <property type="entry name" value="TIF_IF1"/>
</dbReference>
<dbReference type="NCBIfam" id="TIGR00008">
    <property type="entry name" value="infA"/>
    <property type="match status" value="1"/>
</dbReference>
<dbReference type="PANTHER" id="PTHR33370">
    <property type="entry name" value="TRANSLATION INITIATION FACTOR IF-1, CHLOROPLASTIC"/>
    <property type="match status" value="1"/>
</dbReference>
<dbReference type="PANTHER" id="PTHR33370:SF1">
    <property type="entry name" value="TRANSLATION INITIATION FACTOR IF-1, CHLOROPLASTIC"/>
    <property type="match status" value="1"/>
</dbReference>
<dbReference type="Pfam" id="PF01176">
    <property type="entry name" value="eIF-1a"/>
    <property type="match status" value="1"/>
</dbReference>
<dbReference type="SMART" id="SM00316">
    <property type="entry name" value="S1"/>
    <property type="match status" value="1"/>
</dbReference>
<dbReference type="SUPFAM" id="SSF50249">
    <property type="entry name" value="Nucleic acid-binding proteins"/>
    <property type="match status" value="1"/>
</dbReference>
<dbReference type="PROSITE" id="PS50832">
    <property type="entry name" value="S1_IF1_TYPE"/>
    <property type="match status" value="1"/>
</dbReference>
<comment type="function">
    <text evidence="1">One of the essential components for the initiation of protein synthesis. Stabilizes the binding of IF-2 and IF-3 on the 30S subunit to which N-formylmethionyl-tRNA(fMet) subsequently binds. Helps modulate mRNA selection, yielding the 30S pre-initiation complex (PIC). Upon addition of the 50S ribosomal subunit IF-1, IF-2 and IF-3 are released leaving the mature 70S translation initiation complex.</text>
</comment>
<comment type="subunit">
    <text evidence="1">Component of the 30S ribosomal translation pre-initiation complex which assembles on the 30S ribosome in the order IF-2 and IF-3, IF-1 and N-formylmethionyl-tRNA(fMet); mRNA recruitment can occur at any time during PIC assembly.</text>
</comment>
<comment type="subcellular location">
    <subcellularLocation>
        <location evidence="1">Cytoplasm</location>
    </subcellularLocation>
</comment>
<comment type="similarity">
    <text evidence="1">Belongs to the IF-1 family.</text>
</comment>
<evidence type="ECO:0000255" key="1">
    <source>
        <dbReference type="HAMAP-Rule" id="MF_00075"/>
    </source>
</evidence>
<keyword id="KW-0963">Cytoplasm</keyword>
<keyword id="KW-0396">Initiation factor</keyword>
<keyword id="KW-0648">Protein biosynthesis</keyword>
<keyword id="KW-1185">Reference proteome</keyword>
<keyword id="KW-0694">RNA-binding</keyword>
<keyword id="KW-0699">rRNA-binding</keyword>
<sequence length="80" mass="9196">MGKKKRKQEHEKERGILLEGEVVEALPNGMFRVKLETGQEVLAHIAGKLRVNFIRILPGDKVKVELSPYDLTRGRIVYRL</sequence>